<name>TRMB_BRUME</name>
<accession>Q8YEA9</accession>
<gene>
    <name evidence="2" type="primary">trmB</name>
    <name type="ordered locus">BMEI1969</name>
</gene>
<keyword id="KW-0489">Methyltransferase</keyword>
<keyword id="KW-0949">S-adenosyl-L-methionine</keyword>
<keyword id="KW-0808">Transferase</keyword>
<keyword id="KW-0819">tRNA processing</keyword>
<dbReference type="EC" id="2.1.1.33" evidence="2"/>
<dbReference type="EMBL" id="AE008917">
    <property type="protein sequence ID" value="AAL53150.1"/>
    <property type="molecule type" value="Genomic_DNA"/>
</dbReference>
<dbReference type="PIR" id="AC3498">
    <property type="entry name" value="AC3498"/>
</dbReference>
<dbReference type="RefSeq" id="WP_004684581.1">
    <property type="nucleotide sequence ID" value="NZ_GG703778.1"/>
</dbReference>
<dbReference type="SMR" id="Q8YEA9"/>
<dbReference type="KEGG" id="bme:BMEI1969"/>
<dbReference type="KEGG" id="bmel:DK63_1521"/>
<dbReference type="PATRIC" id="fig|224914.52.peg.1605"/>
<dbReference type="eggNOG" id="COG0220">
    <property type="taxonomic scope" value="Bacteria"/>
</dbReference>
<dbReference type="PhylomeDB" id="Q8YEA9"/>
<dbReference type="UniPathway" id="UPA00989"/>
<dbReference type="Proteomes" id="UP000000419">
    <property type="component" value="Chromosome I"/>
</dbReference>
<dbReference type="GO" id="GO:0043527">
    <property type="term" value="C:tRNA methyltransferase complex"/>
    <property type="evidence" value="ECO:0007669"/>
    <property type="project" value="TreeGrafter"/>
</dbReference>
<dbReference type="GO" id="GO:0008176">
    <property type="term" value="F:tRNA (guanine(46)-N7)-methyltransferase activity"/>
    <property type="evidence" value="ECO:0007669"/>
    <property type="project" value="UniProtKB-UniRule"/>
</dbReference>
<dbReference type="Gene3D" id="3.40.50.150">
    <property type="entry name" value="Vaccinia Virus protein VP39"/>
    <property type="match status" value="1"/>
</dbReference>
<dbReference type="HAMAP" id="MF_01057">
    <property type="entry name" value="tRNA_methyltr_TrmB"/>
    <property type="match status" value="1"/>
</dbReference>
<dbReference type="InterPro" id="IPR029063">
    <property type="entry name" value="SAM-dependent_MTases_sf"/>
</dbReference>
<dbReference type="InterPro" id="IPR003358">
    <property type="entry name" value="tRNA_(Gua-N-7)_MeTrfase_Trmb"/>
</dbReference>
<dbReference type="InterPro" id="IPR055361">
    <property type="entry name" value="tRNA_methyltr_TrmB_bact"/>
</dbReference>
<dbReference type="PANTHER" id="PTHR23417">
    <property type="entry name" value="3-DEOXY-D-MANNO-OCTULOSONIC-ACID TRANSFERASE/TRNA GUANINE-N 7 - -METHYLTRANSFERASE"/>
    <property type="match status" value="1"/>
</dbReference>
<dbReference type="PANTHER" id="PTHR23417:SF14">
    <property type="entry name" value="PENTACOTRIPEPTIDE-REPEAT REGION OF PRORP DOMAIN-CONTAINING PROTEIN"/>
    <property type="match status" value="1"/>
</dbReference>
<dbReference type="Pfam" id="PF02390">
    <property type="entry name" value="Methyltransf_4"/>
    <property type="match status" value="1"/>
</dbReference>
<dbReference type="SUPFAM" id="SSF53335">
    <property type="entry name" value="S-adenosyl-L-methionine-dependent methyltransferases"/>
    <property type="match status" value="1"/>
</dbReference>
<dbReference type="PROSITE" id="PS51625">
    <property type="entry name" value="SAM_MT_TRMB"/>
    <property type="match status" value="1"/>
</dbReference>
<comment type="function">
    <text evidence="2">Catalyzes the formation of N(7)-methylguanine at position 46 (m7G46) in tRNA.</text>
</comment>
<comment type="catalytic activity">
    <reaction evidence="2">
        <text>guanosine(46) in tRNA + S-adenosyl-L-methionine = N(7)-methylguanosine(46) in tRNA + S-adenosyl-L-homocysteine</text>
        <dbReference type="Rhea" id="RHEA:42708"/>
        <dbReference type="Rhea" id="RHEA-COMP:10188"/>
        <dbReference type="Rhea" id="RHEA-COMP:10189"/>
        <dbReference type="ChEBI" id="CHEBI:57856"/>
        <dbReference type="ChEBI" id="CHEBI:59789"/>
        <dbReference type="ChEBI" id="CHEBI:74269"/>
        <dbReference type="ChEBI" id="CHEBI:74480"/>
        <dbReference type="EC" id="2.1.1.33"/>
    </reaction>
</comment>
<comment type="pathway">
    <text evidence="2">tRNA modification; N(7)-methylguanine-tRNA biosynthesis.</text>
</comment>
<comment type="similarity">
    <text evidence="2">Belongs to the class I-like SAM-binding methyltransferase superfamily. TrmB family.</text>
</comment>
<organism>
    <name type="scientific">Brucella melitensis biotype 1 (strain ATCC 23456 / CCUG 17765 / NCTC 10094 / 16M)</name>
    <dbReference type="NCBI Taxonomy" id="224914"/>
    <lineage>
        <taxon>Bacteria</taxon>
        <taxon>Pseudomonadati</taxon>
        <taxon>Pseudomonadota</taxon>
        <taxon>Alphaproteobacteria</taxon>
        <taxon>Hyphomicrobiales</taxon>
        <taxon>Brucellaceae</taxon>
        <taxon>Brucella/Ochrobactrum group</taxon>
        <taxon>Brucella</taxon>
    </lineage>
</organism>
<protein>
    <recommendedName>
        <fullName evidence="2">tRNA (guanine-N(7)-)-methyltransferase</fullName>
        <ecNumber evidence="2">2.1.1.33</ecNumber>
    </recommendedName>
    <alternativeName>
        <fullName evidence="2">tRNA (guanine(46)-N(7))-methyltransferase</fullName>
    </alternativeName>
    <alternativeName>
        <fullName evidence="2">tRNA(m7G46)-methyltransferase</fullName>
    </alternativeName>
</protein>
<reference key="1">
    <citation type="journal article" date="2002" name="Proc. Natl. Acad. Sci. U.S.A.">
        <title>The genome sequence of the facultative intracellular pathogen Brucella melitensis.</title>
        <authorList>
            <person name="DelVecchio V.G."/>
            <person name="Kapatral V."/>
            <person name="Redkar R.J."/>
            <person name="Patra G."/>
            <person name="Mujer C."/>
            <person name="Los T."/>
            <person name="Ivanova N."/>
            <person name="Anderson I."/>
            <person name="Bhattacharyya A."/>
            <person name="Lykidis A."/>
            <person name="Reznik G."/>
            <person name="Jablonski L."/>
            <person name="Larsen N."/>
            <person name="D'Souza M."/>
            <person name="Bernal A."/>
            <person name="Mazur M."/>
            <person name="Goltsman E."/>
            <person name="Selkov E."/>
            <person name="Elzer P.H."/>
            <person name="Hagius S."/>
            <person name="O'Callaghan D."/>
            <person name="Letesson J.-J."/>
            <person name="Haselkorn R."/>
            <person name="Kyrpides N.C."/>
            <person name="Overbeek R."/>
        </authorList>
    </citation>
    <scope>NUCLEOTIDE SEQUENCE [LARGE SCALE GENOMIC DNA]</scope>
    <source>
        <strain>ATCC 23456 / CCUG 17765 / NCTC 10094 / 16M</strain>
    </source>
</reference>
<proteinExistence type="inferred from homology"/>
<evidence type="ECO:0000250" key="1"/>
<evidence type="ECO:0000255" key="2">
    <source>
        <dbReference type="HAMAP-Rule" id="MF_01057"/>
    </source>
</evidence>
<evidence type="ECO:0000256" key="3">
    <source>
        <dbReference type="SAM" id="MobiDB-lite"/>
    </source>
</evidence>
<sequence>MIDENHPMRAAGNFFGRRHGKPLRPHQSNLFEDLLPRLKLDLATPAPQDLRSLFEAPVETVRMEIGFGGGEHLHHESGRYPQSGFIGVEPFINGMAKMLAALDQAPRPNLRLYDEDATAVLDWLPDASLAGIDLFYPDPWHKRRHWKRRFVSDANLDRFARVLKPGAKFRFASDIEHYVNWTLQHCRRHAAFDWQAESPADWNDAYEGWPGTRYEAKAFREGRRAAYLTFIRR</sequence>
<feature type="chain" id="PRO_0000171305" description="tRNA (guanine-N(7)-)-methyltransferase">
    <location>
        <begin position="1"/>
        <end position="233"/>
    </location>
</feature>
<feature type="region of interest" description="Disordered" evidence="3">
    <location>
        <begin position="1"/>
        <end position="22"/>
    </location>
</feature>
<feature type="active site" evidence="1">
    <location>
        <position position="138"/>
    </location>
</feature>
<feature type="binding site" evidence="2">
    <location>
        <position position="64"/>
    </location>
    <ligand>
        <name>S-adenosyl-L-methionine</name>
        <dbReference type="ChEBI" id="CHEBI:59789"/>
    </ligand>
</feature>
<feature type="binding site" evidence="2">
    <location>
        <position position="89"/>
    </location>
    <ligand>
        <name>S-adenosyl-L-methionine</name>
        <dbReference type="ChEBI" id="CHEBI:59789"/>
    </ligand>
</feature>
<feature type="binding site" evidence="2">
    <location>
        <position position="116"/>
    </location>
    <ligand>
        <name>S-adenosyl-L-methionine</name>
        <dbReference type="ChEBI" id="CHEBI:59789"/>
    </ligand>
</feature>
<feature type="binding site" evidence="2">
    <location>
        <position position="138"/>
    </location>
    <ligand>
        <name>S-adenosyl-L-methionine</name>
        <dbReference type="ChEBI" id="CHEBI:59789"/>
    </ligand>
</feature>
<feature type="binding site" evidence="2">
    <location>
        <position position="142"/>
    </location>
    <ligand>
        <name>substrate</name>
    </ligand>
</feature>
<feature type="binding site" evidence="2">
    <location>
        <position position="174"/>
    </location>
    <ligand>
        <name>substrate</name>
    </ligand>
</feature>
<feature type="binding site" evidence="2">
    <location>
        <begin position="212"/>
        <end position="215"/>
    </location>
    <ligand>
        <name>substrate</name>
    </ligand>
</feature>